<sequence>MAEQVALSRTQVCGILREELYQGDAFHQSDTHIFIIMGASGDLAKKKIYPTIWWLFRDGLLPEDTFIVGYARSNLTVDDIRKQSEPYFKATPEENLKLEEFFSRNSYVAGQYDEPASFQRLNAHMNSLHHGSQANRLFYLALPPTVYEAVTKNIKETCMSQIGWNRVIVEKPFGKDLQSSDKLSNHISSLFHEDQIYRIDHYLGKEMVQNLMVLRFGNRIFGPIWNRDNIACVIFTFKEPFGTLGRGGYFDEFGIIRDVMQNHLLQMLCLVAMEKPASTNSDDVRDEKVKVLKCISEVRATDVVLGQYVGNPDGEGEATKGYLDDPTVPRGSTTATFAAVVLYVENERWDGVPFILRCGKALNERKAEVRLQFRDVAGDIFQRQCKRNELVIRVQPNEAVYTKMMTKKPGMFFNPEESELDLTYGNRYKDVKLPDAYERLILDVFCGSQMHFVRSDELREAWRIFTPLLHHIEKEKTQPIAYVYGSRGPPEADELMKRVGFQYEGTYKWVNPHKL</sequence>
<feature type="initiator methionine" description="Removed" evidence="2">
    <location>
        <position position="1"/>
    </location>
</feature>
<feature type="chain" id="PRO_0000068084" description="Glucose-6-phosphate 1-dehydrogenase">
    <location>
        <begin position="2"/>
        <end position="515"/>
    </location>
</feature>
<feature type="active site" description="Proton acceptor" evidence="1">
    <location>
        <position position="263"/>
    </location>
</feature>
<feature type="binding site" evidence="2">
    <location>
        <begin position="38"/>
        <end position="45"/>
    </location>
    <ligand>
        <name>NADP(+)</name>
        <dbReference type="ChEBI" id="CHEBI:58349"/>
        <label>1</label>
    </ligand>
</feature>
<feature type="binding site" evidence="2">
    <location>
        <position position="72"/>
    </location>
    <ligand>
        <name>NADP(+)</name>
        <dbReference type="ChEBI" id="CHEBI:58349"/>
        <label>1</label>
    </ligand>
</feature>
<feature type="binding site" evidence="2">
    <location>
        <position position="147"/>
    </location>
    <ligand>
        <name>NADP(+)</name>
        <dbReference type="ChEBI" id="CHEBI:58349"/>
        <label>1</label>
    </ligand>
</feature>
<feature type="binding site" evidence="2">
    <location>
        <position position="171"/>
    </location>
    <ligand>
        <name>D-glucose 6-phosphate</name>
        <dbReference type="ChEBI" id="CHEBI:61548"/>
    </ligand>
</feature>
<feature type="binding site" evidence="2">
    <location>
        <position position="171"/>
    </location>
    <ligand>
        <name>NADP(+)</name>
        <dbReference type="ChEBI" id="CHEBI:58349"/>
        <label>1</label>
    </ligand>
</feature>
<feature type="binding site" evidence="2">
    <location>
        <begin position="201"/>
        <end position="205"/>
    </location>
    <ligand>
        <name>D-glucose 6-phosphate</name>
        <dbReference type="ChEBI" id="CHEBI:61548"/>
    </ligand>
</feature>
<feature type="binding site" evidence="2">
    <location>
        <position position="239"/>
    </location>
    <ligand>
        <name>D-glucose 6-phosphate</name>
        <dbReference type="ChEBI" id="CHEBI:61548"/>
    </ligand>
</feature>
<feature type="binding site" evidence="2">
    <location>
        <position position="258"/>
    </location>
    <ligand>
        <name>D-glucose 6-phosphate</name>
        <dbReference type="ChEBI" id="CHEBI:61548"/>
    </ligand>
</feature>
<feature type="binding site" evidence="2">
    <location>
        <position position="357"/>
    </location>
    <ligand>
        <name>NADP(+)</name>
        <dbReference type="ChEBI" id="CHEBI:58349"/>
        <label>2</label>
    </ligand>
</feature>
<feature type="binding site" evidence="2">
    <location>
        <position position="360"/>
    </location>
    <ligand>
        <name>D-glucose 6-phosphate</name>
        <dbReference type="ChEBI" id="CHEBI:61548"/>
    </ligand>
</feature>
<feature type="binding site" evidence="2">
    <location>
        <position position="365"/>
    </location>
    <ligand>
        <name>D-glucose 6-phosphate</name>
        <dbReference type="ChEBI" id="CHEBI:61548"/>
    </ligand>
</feature>
<feature type="binding site" evidence="2">
    <location>
        <position position="366"/>
    </location>
    <ligand>
        <name>NADP(+)</name>
        <dbReference type="ChEBI" id="CHEBI:58349"/>
        <label>2</label>
    </ligand>
</feature>
<feature type="binding site" evidence="2">
    <location>
        <position position="370"/>
    </location>
    <ligand>
        <name>NADP(+)</name>
        <dbReference type="ChEBI" id="CHEBI:58349"/>
        <label>2</label>
    </ligand>
</feature>
<feature type="binding site" evidence="2">
    <location>
        <position position="393"/>
    </location>
    <ligand>
        <name>NADP(+)</name>
        <dbReference type="ChEBI" id="CHEBI:58349"/>
        <label>2</label>
    </ligand>
</feature>
<feature type="binding site" evidence="2">
    <location>
        <position position="395"/>
    </location>
    <ligand>
        <name>D-glucose 6-phosphate</name>
        <dbReference type="ChEBI" id="CHEBI:61548"/>
    </ligand>
</feature>
<feature type="binding site" evidence="2">
    <location>
        <begin position="401"/>
        <end position="403"/>
    </location>
    <ligand>
        <name>NADP(+)</name>
        <dbReference type="ChEBI" id="CHEBI:58349"/>
        <label>2</label>
    </ligand>
</feature>
<feature type="binding site" evidence="2">
    <location>
        <begin position="421"/>
        <end position="423"/>
    </location>
    <ligand>
        <name>NADP(+)</name>
        <dbReference type="ChEBI" id="CHEBI:58349"/>
        <label>2</label>
    </ligand>
</feature>
<feature type="binding site" evidence="2">
    <location>
        <position position="487"/>
    </location>
    <ligand>
        <name>NADP(+)</name>
        <dbReference type="ChEBI" id="CHEBI:58349"/>
        <label>2</label>
    </ligand>
</feature>
<feature type="binding site" evidence="2">
    <location>
        <position position="503"/>
    </location>
    <ligand>
        <name>NADP(+)</name>
        <dbReference type="ChEBI" id="CHEBI:58349"/>
        <label>2</label>
    </ligand>
</feature>
<feature type="binding site" evidence="2">
    <location>
        <position position="509"/>
    </location>
    <ligand>
        <name>NADP(+)</name>
        <dbReference type="ChEBI" id="CHEBI:58349"/>
        <label>2</label>
    </ligand>
</feature>
<feature type="modified residue" description="N-acetylalanine" evidence="2">
    <location>
        <position position="2"/>
    </location>
</feature>
<feature type="modified residue" description="Phosphoserine" evidence="2">
    <location>
        <position position="8"/>
    </location>
</feature>
<feature type="modified residue" description="Phosphothreonine" evidence="2">
    <location>
        <position position="10"/>
    </location>
</feature>
<feature type="modified residue" description="N6-acetyllysine" evidence="2">
    <location>
        <position position="89"/>
    </location>
</feature>
<feature type="modified residue" description="N6-(2-hydroxyisobutyryl)lysine; alternate" evidence="2">
    <location>
        <position position="171"/>
    </location>
</feature>
<feature type="modified residue" description="N6-acetyllysine; alternate" evidence="2">
    <location>
        <position position="171"/>
    </location>
</feature>
<feature type="modified residue" description="N6-acetyllysine" evidence="2">
    <location>
        <position position="403"/>
    </location>
</feature>
<feature type="modified residue" description="N6-acetyllysine" evidence="2">
    <location>
        <position position="432"/>
    </location>
</feature>
<feature type="modified residue" description="N6-acetyllysine" evidence="2">
    <location>
        <position position="497"/>
    </location>
</feature>
<feature type="modified residue" description="Phosphotyrosine" evidence="2">
    <location>
        <position position="503"/>
    </location>
</feature>
<accession>Q29492</accession>
<dbReference type="EC" id="1.1.1.49" evidence="2"/>
<dbReference type="EMBL" id="U13899">
    <property type="protein sequence ID" value="AAA76599.1"/>
    <property type="molecule type" value="mRNA"/>
</dbReference>
<dbReference type="SMR" id="Q29492"/>
<dbReference type="UniPathway" id="UPA00115">
    <property type="reaction ID" value="UER00408"/>
</dbReference>
<dbReference type="GO" id="GO:0005829">
    <property type="term" value="C:cytosol"/>
    <property type="evidence" value="ECO:0007669"/>
    <property type="project" value="UniProtKB-SubCell"/>
</dbReference>
<dbReference type="GO" id="GO:0016020">
    <property type="term" value="C:membrane"/>
    <property type="evidence" value="ECO:0007669"/>
    <property type="project" value="UniProtKB-SubCell"/>
</dbReference>
<dbReference type="GO" id="GO:0004345">
    <property type="term" value="F:glucose-6-phosphate dehydrogenase activity"/>
    <property type="evidence" value="ECO:0000250"/>
    <property type="project" value="UniProtKB"/>
</dbReference>
<dbReference type="GO" id="GO:0050661">
    <property type="term" value="F:NADP binding"/>
    <property type="evidence" value="ECO:0007669"/>
    <property type="project" value="InterPro"/>
</dbReference>
<dbReference type="GO" id="GO:0051156">
    <property type="term" value="P:glucose 6-phosphate metabolic process"/>
    <property type="evidence" value="ECO:0000250"/>
    <property type="project" value="UniProtKB"/>
</dbReference>
<dbReference type="GO" id="GO:0006006">
    <property type="term" value="P:glucose metabolic process"/>
    <property type="evidence" value="ECO:0007669"/>
    <property type="project" value="UniProtKB-KW"/>
</dbReference>
<dbReference type="GO" id="GO:0006739">
    <property type="term" value="P:NADP metabolic process"/>
    <property type="evidence" value="ECO:0000250"/>
    <property type="project" value="UniProtKB"/>
</dbReference>
<dbReference type="GO" id="GO:0009051">
    <property type="term" value="P:pentose-phosphate shunt, oxidative branch"/>
    <property type="evidence" value="ECO:0007669"/>
    <property type="project" value="TreeGrafter"/>
</dbReference>
<dbReference type="FunFam" id="3.30.360.10:FF:000013">
    <property type="entry name" value="Glucose-6-phosphate 1-dehydrogenase"/>
    <property type="match status" value="1"/>
</dbReference>
<dbReference type="FunFam" id="3.40.50.720:FF:000111">
    <property type="entry name" value="Glucose-6-phosphate 1-dehydrogenase"/>
    <property type="match status" value="1"/>
</dbReference>
<dbReference type="Gene3D" id="3.30.360.10">
    <property type="entry name" value="Dihydrodipicolinate Reductase, domain 2"/>
    <property type="match status" value="1"/>
</dbReference>
<dbReference type="Gene3D" id="3.40.50.720">
    <property type="entry name" value="NAD(P)-binding Rossmann-like Domain"/>
    <property type="match status" value="1"/>
</dbReference>
<dbReference type="HAMAP" id="MF_00966">
    <property type="entry name" value="G6PD"/>
    <property type="match status" value="1"/>
</dbReference>
<dbReference type="InterPro" id="IPR001282">
    <property type="entry name" value="G6P_DH"/>
</dbReference>
<dbReference type="InterPro" id="IPR019796">
    <property type="entry name" value="G6P_DH_AS"/>
</dbReference>
<dbReference type="InterPro" id="IPR022675">
    <property type="entry name" value="G6P_DH_C"/>
</dbReference>
<dbReference type="InterPro" id="IPR022674">
    <property type="entry name" value="G6P_DH_NAD-bd"/>
</dbReference>
<dbReference type="InterPro" id="IPR036291">
    <property type="entry name" value="NAD(P)-bd_dom_sf"/>
</dbReference>
<dbReference type="NCBIfam" id="TIGR00871">
    <property type="entry name" value="zwf"/>
    <property type="match status" value="1"/>
</dbReference>
<dbReference type="PANTHER" id="PTHR23429:SF0">
    <property type="entry name" value="GLUCOSE-6-PHOSPHATE 1-DEHYDROGENASE"/>
    <property type="match status" value="1"/>
</dbReference>
<dbReference type="PANTHER" id="PTHR23429">
    <property type="entry name" value="GLUCOSE-6-PHOSPHATE 1-DEHYDROGENASE G6PD"/>
    <property type="match status" value="1"/>
</dbReference>
<dbReference type="Pfam" id="PF02781">
    <property type="entry name" value="G6PD_C"/>
    <property type="match status" value="1"/>
</dbReference>
<dbReference type="Pfam" id="PF00479">
    <property type="entry name" value="G6PD_N"/>
    <property type="match status" value="1"/>
</dbReference>
<dbReference type="PIRSF" id="PIRSF000110">
    <property type="entry name" value="G6PD"/>
    <property type="match status" value="1"/>
</dbReference>
<dbReference type="PRINTS" id="PR00079">
    <property type="entry name" value="G6PDHDRGNASE"/>
</dbReference>
<dbReference type="SUPFAM" id="SSF55347">
    <property type="entry name" value="Glyceraldehyde-3-phosphate dehydrogenase-like, C-terminal domain"/>
    <property type="match status" value="1"/>
</dbReference>
<dbReference type="SUPFAM" id="SSF51735">
    <property type="entry name" value="NAD(P)-binding Rossmann-fold domains"/>
    <property type="match status" value="1"/>
</dbReference>
<dbReference type="PROSITE" id="PS00069">
    <property type="entry name" value="G6P_DEHYDROGENASE"/>
    <property type="match status" value="1"/>
</dbReference>
<keyword id="KW-0007">Acetylation</keyword>
<keyword id="KW-0119">Carbohydrate metabolism</keyword>
<keyword id="KW-0963">Cytoplasm</keyword>
<keyword id="KW-0313">Glucose metabolism</keyword>
<keyword id="KW-0379">Hydroxylation</keyword>
<keyword id="KW-0472">Membrane</keyword>
<keyword id="KW-0521">NADP</keyword>
<keyword id="KW-0560">Oxidoreductase</keyword>
<keyword id="KW-0597">Phosphoprotein</keyword>
<comment type="function">
    <text evidence="2">Cytosolic glucose-6-phosphate dehydrogenase that catalyzes the first and rate-limiting step of the oxidative branch within the pentose phosphate pathway/shunt, an alternative route to glycolysis for the dissimilation of carbohydrates and a major source of reducing power and metabolic intermediates for fatty acid and nucleic acid biosynthetic processes.</text>
</comment>
<comment type="catalytic activity">
    <reaction evidence="2">
        <text>D-glucose 6-phosphate + NADP(+) = 6-phospho-D-glucono-1,5-lactone + NADPH + H(+)</text>
        <dbReference type="Rhea" id="RHEA:15841"/>
        <dbReference type="ChEBI" id="CHEBI:15378"/>
        <dbReference type="ChEBI" id="CHEBI:57783"/>
        <dbReference type="ChEBI" id="CHEBI:57955"/>
        <dbReference type="ChEBI" id="CHEBI:58349"/>
        <dbReference type="ChEBI" id="CHEBI:61548"/>
        <dbReference type="EC" id="1.1.1.49"/>
    </reaction>
    <physiologicalReaction direction="left-to-right" evidence="2">
        <dbReference type="Rhea" id="RHEA:15842"/>
    </physiologicalReaction>
</comment>
<comment type="pathway">
    <text evidence="2">Carbohydrate degradation; pentose phosphate pathway; D-ribulose 5-phosphate from D-glucose 6-phosphate (oxidative stage): step 1/3.</text>
</comment>
<comment type="subunit">
    <text evidence="2">Homotetramer; dimer of dimers. Interacts with SIRT2; the interaction is enhanced by H(2)O(2) treatment (By similarity). Forms a ternary complex with ALDOB and TP53; this interaction is direct. ALDOB stabilizes the complex inhibiting G6PD activity and keeping oxidative pentose phosphate metabolism in check.</text>
</comment>
<comment type="subcellular location">
    <subcellularLocation>
        <location evidence="2">Cytoplasm</location>
        <location evidence="2">Cytosol</location>
    </subcellularLocation>
    <subcellularLocation>
        <location evidence="2">Membrane</location>
        <topology evidence="2">Peripheral membrane protein</topology>
    </subcellularLocation>
</comment>
<comment type="PTM">
    <text evidence="2">Acetylated by ELP3 at Lys-403; acetylation inhibits its homodimerization and enzyme activity. Deacetylated by SIRT2 at Lys-403; deacetylation stimulates its enzyme activity (By similarity).</text>
</comment>
<comment type="similarity">
    <text evidence="3">Belongs to the glucose-6-phosphate dehydrogenase family.</text>
</comment>
<proteinExistence type="evidence at transcript level"/>
<organism>
    <name type="scientific">Osphranter robustus</name>
    <name type="common">Wallaroo</name>
    <name type="synonym">Macropus robustus</name>
    <dbReference type="NCBI Taxonomy" id="9319"/>
    <lineage>
        <taxon>Eukaryota</taxon>
        <taxon>Metazoa</taxon>
        <taxon>Chordata</taxon>
        <taxon>Craniata</taxon>
        <taxon>Vertebrata</taxon>
        <taxon>Euteleostomi</taxon>
        <taxon>Mammalia</taxon>
        <taxon>Metatheria</taxon>
        <taxon>Diprotodontia</taxon>
        <taxon>Macropodidae</taxon>
        <taxon>Osphranter</taxon>
    </lineage>
</organism>
<name>G6PD_OSPRO</name>
<evidence type="ECO:0000250" key="1">
    <source>
        <dbReference type="UniProtKB" id="P11411"/>
    </source>
</evidence>
<evidence type="ECO:0000250" key="2">
    <source>
        <dbReference type="UniProtKB" id="P11413"/>
    </source>
</evidence>
<evidence type="ECO:0000305" key="3"/>
<protein>
    <recommendedName>
        <fullName>Glucose-6-phosphate 1-dehydrogenase</fullName>
        <shortName>G6PD</shortName>
        <ecNumber evidence="2">1.1.1.49</ecNumber>
    </recommendedName>
</protein>
<gene>
    <name type="primary">G6PD</name>
</gene>
<reference key="1">
    <citation type="journal article" date="1995" name="Mamm. Genome">
        <title>Full-length cDNA sequence of X-linked G6PD of an Australian marsupial, the wallaroo.</title>
        <authorList>
            <person name="Loebel D.A."/>
            <person name="Longhurst T.J."/>
            <person name="Johnston P.G."/>
        </authorList>
    </citation>
    <scope>NUCLEOTIDE SEQUENCE [MRNA]</scope>
    <source>
        <tissue>Liver</tissue>
    </source>
</reference>